<evidence type="ECO:0000250" key="1">
    <source>
        <dbReference type="UniProtKB" id="D3Z4I3"/>
    </source>
</evidence>
<evidence type="ECO:0000250" key="2">
    <source>
        <dbReference type="UniProtKB" id="Q6GQD3"/>
    </source>
</evidence>
<evidence type="ECO:0000250" key="3">
    <source>
        <dbReference type="UniProtKB" id="Q9BX46"/>
    </source>
</evidence>
<evidence type="ECO:0000255" key="4">
    <source>
        <dbReference type="PROSITE-ProRule" id="PRU00176"/>
    </source>
</evidence>
<evidence type="ECO:0000269" key="5">
    <source>
    </source>
</evidence>
<evidence type="ECO:0000305" key="6"/>
<organism>
    <name type="scientific">Danio rerio</name>
    <name type="common">Zebrafish</name>
    <name type="synonym">Brachydanio rerio</name>
    <dbReference type="NCBI Taxonomy" id="7955"/>
    <lineage>
        <taxon>Eukaryota</taxon>
        <taxon>Metazoa</taxon>
        <taxon>Chordata</taxon>
        <taxon>Craniata</taxon>
        <taxon>Vertebrata</taxon>
        <taxon>Euteleostomi</taxon>
        <taxon>Actinopterygii</taxon>
        <taxon>Neopterygii</taxon>
        <taxon>Teleostei</taxon>
        <taxon>Ostariophysi</taxon>
        <taxon>Cypriniformes</taxon>
        <taxon>Danionidae</taxon>
        <taxon>Danioninae</taxon>
        <taxon>Danio</taxon>
    </lineage>
</organism>
<keyword id="KW-0963">Cytoplasm</keyword>
<keyword id="KW-0221">Differentiation</keyword>
<keyword id="KW-0507">mRNA processing</keyword>
<keyword id="KW-0508">mRNA splicing</keyword>
<keyword id="KW-0539">Nucleus</keyword>
<keyword id="KW-1185">Reference proteome</keyword>
<keyword id="KW-0694">RNA-binding</keyword>
<keyword id="KW-0810">Translation regulation</keyword>
<gene>
    <name type="primary">rbm24</name>
</gene>
<comment type="function">
    <text evidence="1 3 5">Multifunctional RNA-binding protein involved in the regulation of pre-mRNA splicing, mRNA stability and mRNA translation important for cell fate decision and differentiation. Plays a major role in pre-mRNA alternative splicing regulation. Mediates preferentially muscle-specific exon inclusion in numerous mRNAs important for striated cardiac and skeletal muscle cell differentiation. Binds to intronic splicing enhancer (ISE) composed of stretches of GU-rich motifs localized in flanking intron of exon that will be included by alternative splicing. Involved in embryonic stem cell (ESC) transition to cardiac cell differentiation by promoting pre-mRNA alternative splicing events of several pluripotency and/or differentiation genes. Plays a role in the regulation of mRNA stability and mRNA translation to which it is bound. Involved in myogenic differentiation by regulating myog levels. Binds to a huge amount of mRNAs (By similarity). Required for embryonic heart development, sarcomer and M-band formation in striated muscles (PubMed:22345307).</text>
</comment>
<comment type="subcellular location">
    <subcellularLocation>
        <location evidence="2">Nucleus</location>
    </subcellularLocation>
    <subcellularLocation>
        <location evidence="1">Cytoplasm</location>
    </subcellularLocation>
</comment>
<comment type="developmental stage">
    <text evidence="5">Expressed in the embryo from 2 to 72 hours post-fertilization (hpf) (PubMed:22345307). Expressed in the embryonic heart and somites at 14, 20 and 24 hpf (PubMed:22345307). Expressed in myocardial progenitors from 18 to 24 hpf (PubMed:22345307). Expressed in the otic vesicle at 14 hpf (PubMed:22345307).</text>
</comment>
<comment type="domain">
    <text evidence="3">The RRM domain is necessary for mRNA stability and mRNA translation regulation.</text>
</comment>
<comment type="disruption phenotype">
    <text evidence="5">Morpholino knockdown of the protein leads to death at 6 days post-fertilization (dpf) due to heart growth defects and absence of blood circulation, despite the presence of a beating heart (PubMed:22345307). Show reduced heart contractility from 30 hours post-fertilization (hpf), onwards (PubMed:22345307). Display defects in sarcomere organization from 33 hpf, onwards (PubMed:22345307). Show altered expression of key genes necessary for sarcomere formation (PubMed:22345307).</text>
</comment>
<protein>
    <recommendedName>
        <fullName evidence="6">RNA-binding protein 24</fullName>
    </recommendedName>
    <alternativeName>
        <fullName evidence="3">RNA-binding motif protein 24</fullName>
    </alternativeName>
    <alternativeName>
        <fullName evidence="2">RNA-binding protein SEB-4</fullName>
    </alternativeName>
</protein>
<accession>Q76LC6</accession>
<feature type="chain" id="PRO_0000273372" description="RNA-binding protein 24">
    <location>
        <begin position="1"/>
        <end position="230"/>
    </location>
</feature>
<feature type="domain" description="RRM" evidence="4">
    <location>
        <begin position="11"/>
        <end position="88"/>
    </location>
</feature>
<dbReference type="EMBL" id="AB080735">
    <property type="protein sequence ID" value="BAD12194.1"/>
    <property type="molecule type" value="mRNA"/>
</dbReference>
<dbReference type="RefSeq" id="NP_998030.1">
    <property type="nucleotide sequence ID" value="NM_212865.1"/>
</dbReference>
<dbReference type="SMR" id="Q76LC6"/>
<dbReference type="FunCoup" id="Q76LC6">
    <property type="interactions" value="380"/>
</dbReference>
<dbReference type="STRING" id="7955.ENSDARP00000135480"/>
<dbReference type="PaxDb" id="7955-ENSDARP00000100853"/>
<dbReference type="Ensembl" id="ENSDART00000161826">
    <property type="protein sequence ID" value="ENSDARP00000135480"/>
    <property type="gene ID" value="ENSDARG00000102995"/>
</dbReference>
<dbReference type="GeneID" id="405801"/>
<dbReference type="KEGG" id="dre:405801"/>
<dbReference type="AGR" id="ZFIN:ZDB-GENE-040628-1"/>
<dbReference type="CTD" id="405801"/>
<dbReference type="ZFIN" id="ZDB-GENE-040628-1">
    <property type="gene designation" value="rbm24a"/>
</dbReference>
<dbReference type="eggNOG" id="KOG0149">
    <property type="taxonomic scope" value="Eukaryota"/>
</dbReference>
<dbReference type="HOGENOM" id="CLU_065652_0_1_1"/>
<dbReference type="InParanoid" id="Q76LC6"/>
<dbReference type="OMA" id="IPAHYMY"/>
<dbReference type="OrthoDB" id="4207594at2759"/>
<dbReference type="PhylomeDB" id="Q76LC6"/>
<dbReference type="TreeFam" id="TF314235"/>
<dbReference type="PRO" id="PR:Q76LC6"/>
<dbReference type="Proteomes" id="UP000000437">
    <property type="component" value="Chromosome 19"/>
</dbReference>
<dbReference type="Bgee" id="ENSDARG00000102995">
    <property type="expression patterns" value="Expressed in somite and 44 other cell types or tissues"/>
</dbReference>
<dbReference type="ExpressionAtlas" id="Q76LC6">
    <property type="expression patterns" value="baseline"/>
</dbReference>
<dbReference type="GO" id="GO:0005737">
    <property type="term" value="C:cytoplasm"/>
    <property type="evidence" value="ECO:0000250"/>
    <property type="project" value="UniProtKB"/>
</dbReference>
<dbReference type="GO" id="GO:0005829">
    <property type="term" value="C:cytosol"/>
    <property type="evidence" value="ECO:0000318"/>
    <property type="project" value="GO_Central"/>
</dbReference>
<dbReference type="GO" id="GO:0005634">
    <property type="term" value="C:nucleus"/>
    <property type="evidence" value="ECO:0000318"/>
    <property type="project" value="GO_Central"/>
</dbReference>
<dbReference type="GO" id="GO:0035925">
    <property type="term" value="F:mRNA 3'-UTR AU-rich region binding"/>
    <property type="evidence" value="ECO:0000250"/>
    <property type="project" value="UniProtKB"/>
</dbReference>
<dbReference type="GO" id="GO:0003730">
    <property type="term" value="F:mRNA 3'-UTR binding"/>
    <property type="evidence" value="ECO:0000250"/>
    <property type="project" value="UniProtKB"/>
</dbReference>
<dbReference type="GO" id="GO:1990715">
    <property type="term" value="F:mRNA CDS binding"/>
    <property type="evidence" value="ECO:0000250"/>
    <property type="project" value="UniProtKB"/>
</dbReference>
<dbReference type="GO" id="GO:0097157">
    <property type="term" value="F:pre-mRNA intronic binding"/>
    <property type="evidence" value="ECO:0000250"/>
    <property type="project" value="UniProtKB"/>
</dbReference>
<dbReference type="GO" id="GO:0003723">
    <property type="term" value="F:RNA binding"/>
    <property type="evidence" value="ECO:0000314"/>
    <property type="project" value="ZFIN"/>
</dbReference>
<dbReference type="GO" id="GO:1990825">
    <property type="term" value="F:sequence-specific mRNA binding"/>
    <property type="evidence" value="ECO:0000250"/>
    <property type="project" value="UniProtKB"/>
</dbReference>
<dbReference type="GO" id="GO:0061158">
    <property type="term" value="P:3'-UTR-mediated mRNA destabilization"/>
    <property type="evidence" value="ECO:0000250"/>
    <property type="project" value="UniProtKB"/>
</dbReference>
<dbReference type="GO" id="GO:0003228">
    <property type="term" value="P:atrial cardiac muscle tissue development"/>
    <property type="evidence" value="ECO:0000315"/>
    <property type="project" value="ZFIN"/>
</dbReference>
<dbReference type="GO" id="GO:0072359">
    <property type="term" value="P:circulatory system development"/>
    <property type="evidence" value="ECO:0000316"/>
    <property type="project" value="ZFIN"/>
</dbReference>
<dbReference type="GO" id="GO:0006974">
    <property type="term" value="P:DNA damage response"/>
    <property type="evidence" value="ECO:0000250"/>
    <property type="project" value="UniProtKB"/>
</dbReference>
<dbReference type="GO" id="GO:0048702">
    <property type="term" value="P:embryonic neurocranium morphogenesis"/>
    <property type="evidence" value="ECO:0000315"/>
    <property type="project" value="ZFIN"/>
</dbReference>
<dbReference type="GO" id="GO:0001654">
    <property type="term" value="P:eye development"/>
    <property type="evidence" value="ECO:0000315"/>
    <property type="project" value="ZFIN"/>
</dbReference>
<dbReference type="GO" id="GO:0035315">
    <property type="term" value="P:hair cell differentiation"/>
    <property type="evidence" value="ECO:0000315"/>
    <property type="project" value="ZFIN"/>
</dbReference>
<dbReference type="GO" id="GO:0001947">
    <property type="term" value="P:heart looping"/>
    <property type="evidence" value="ECO:0000315"/>
    <property type="project" value="ZFIN"/>
</dbReference>
<dbReference type="GO" id="GO:0061157">
    <property type="term" value="P:mRNA destabilization"/>
    <property type="evidence" value="ECO:0000250"/>
    <property type="project" value="UniProtKB"/>
</dbReference>
<dbReference type="GO" id="GO:0006397">
    <property type="term" value="P:mRNA processing"/>
    <property type="evidence" value="ECO:0000315"/>
    <property type="project" value="ZFIN"/>
</dbReference>
<dbReference type="GO" id="GO:0048255">
    <property type="term" value="P:mRNA stabilization"/>
    <property type="evidence" value="ECO:0000250"/>
    <property type="project" value="UniProtKB"/>
</dbReference>
<dbReference type="GO" id="GO:2000766">
    <property type="term" value="P:negative regulation of cytoplasmic translation"/>
    <property type="evidence" value="ECO:0000250"/>
    <property type="project" value="UniProtKB"/>
</dbReference>
<dbReference type="GO" id="GO:0071599">
    <property type="term" value="P:otic vesicle development"/>
    <property type="evidence" value="ECO:0000315"/>
    <property type="project" value="ZFIN"/>
</dbReference>
<dbReference type="GO" id="GO:1905870">
    <property type="term" value="P:positive regulation of 3'-UTR-mediated mRNA stabilization"/>
    <property type="evidence" value="ECO:0000250"/>
    <property type="project" value="UniProtKB"/>
</dbReference>
<dbReference type="GO" id="GO:0045663">
    <property type="term" value="P:positive regulation of myoblast differentiation"/>
    <property type="evidence" value="ECO:0000250"/>
    <property type="project" value="UniProtKB"/>
</dbReference>
<dbReference type="GO" id="GO:0010831">
    <property type="term" value="P:positive regulation of myotube differentiation"/>
    <property type="evidence" value="ECO:0000250"/>
    <property type="project" value="UniProtKB"/>
</dbReference>
<dbReference type="GO" id="GO:0060298">
    <property type="term" value="P:positive regulation of sarcomere organization"/>
    <property type="evidence" value="ECO:0000315"/>
    <property type="project" value="UniProtKB"/>
</dbReference>
<dbReference type="GO" id="GO:1902811">
    <property type="term" value="P:positive regulation of skeletal muscle fiber differentiation"/>
    <property type="evidence" value="ECO:0000250"/>
    <property type="project" value="UniProtKB"/>
</dbReference>
<dbReference type="GO" id="GO:2000738">
    <property type="term" value="P:positive regulation of stem cell differentiation"/>
    <property type="evidence" value="ECO:0000250"/>
    <property type="project" value="UniProtKB"/>
</dbReference>
<dbReference type="GO" id="GO:0000381">
    <property type="term" value="P:regulation of alternative mRNA splicing, via spliceosome"/>
    <property type="evidence" value="ECO:0000250"/>
    <property type="project" value="UniProtKB"/>
</dbReference>
<dbReference type="GO" id="GO:0043488">
    <property type="term" value="P:regulation of mRNA stability"/>
    <property type="evidence" value="ECO:0000250"/>
    <property type="project" value="UniProtKB"/>
</dbReference>
<dbReference type="GO" id="GO:0010830">
    <property type="term" value="P:regulation of myotube differentiation"/>
    <property type="evidence" value="ECO:0000250"/>
    <property type="project" value="UniProtKB"/>
</dbReference>
<dbReference type="GO" id="GO:0060297">
    <property type="term" value="P:regulation of sarcomere organization"/>
    <property type="evidence" value="ECO:0000315"/>
    <property type="project" value="ZFIN"/>
</dbReference>
<dbReference type="GO" id="GO:0008380">
    <property type="term" value="P:RNA splicing"/>
    <property type="evidence" value="ECO:0007669"/>
    <property type="project" value="UniProtKB-KW"/>
</dbReference>
<dbReference type="GO" id="GO:0007519">
    <property type="term" value="P:skeletal muscle tissue development"/>
    <property type="evidence" value="ECO:0000315"/>
    <property type="project" value="ZFIN"/>
</dbReference>
<dbReference type="GO" id="GO:0001756">
    <property type="term" value="P:somitogenesis"/>
    <property type="evidence" value="ECO:0000315"/>
    <property type="project" value="ZFIN"/>
</dbReference>
<dbReference type="CDD" id="cd12384">
    <property type="entry name" value="RRM_RBM24_RBM38_like"/>
    <property type="match status" value="1"/>
</dbReference>
<dbReference type="FunFam" id="3.30.70.330:FF:000077">
    <property type="entry name" value="RNA-binding motif protein 24"/>
    <property type="match status" value="1"/>
</dbReference>
<dbReference type="Gene3D" id="3.30.70.330">
    <property type="match status" value="1"/>
</dbReference>
<dbReference type="InterPro" id="IPR012677">
    <property type="entry name" value="Nucleotide-bd_a/b_plait_sf"/>
</dbReference>
<dbReference type="InterPro" id="IPR035979">
    <property type="entry name" value="RBD_domain_sf"/>
</dbReference>
<dbReference type="InterPro" id="IPR050886">
    <property type="entry name" value="RNA-binding_reg"/>
</dbReference>
<dbReference type="InterPro" id="IPR000504">
    <property type="entry name" value="RRM_dom"/>
</dbReference>
<dbReference type="PANTHER" id="PTHR48024">
    <property type="entry name" value="GEO13361P1-RELATED"/>
    <property type="match status" value="1"/>
</dbReference>
<dbReference type="PANTHER" id="PTHR48024:SF10">
    <property type="entry name" value="RNA-BINDING PROTEIN 24"/>
    <property type="match status" value="1"/>
</dbReference>
<dbReference type="Pfam" id="PF00076">
    <property type="entry name" value="RRM_1"/>
    <property type="match status" value="1"/>
</dbReference>
<dbReference type="SMART" id="SM00360">
    <property type="entry name" value="RRM"/>
    <property type="match status" value="1"/>
</dbReference>
<dbReference type="SUPFAM" id="SSF54928">
    <property type="entry name" value="RNA-binding domain, RBD"/>
    <property type="match status" value="1"/>
</dbReference>
<dbReference type="PROSITE" id="PS50102">
    <property type="entry name" value="RRM"/>
    <property type="match status" value="1"/>
</dbReference>
<name>RBM24_DANRE</name>
<proteinExistence type="evidence at transcript level"/>
<sequence length="230" mass="24601">MHTTQKDTTYTKIFVGGLPYHTTDSSLRKYFEVFGEIEEAVVITDRQTGKSRGYGFVTMADRSAADRACKDPNPIIDGRKANVNLAYLGAKPRVMQPGFTFGVPQIHPAFIQRPYGIPTHYVYPQAFMQPSVVIPHIQPTATSATASSPYIDYTGAAYAQYASAATAAAAAAYEQYPYAASPAATGYVAAAGYGYAMQQPLATAAPGSAAAAAAAFGQYQPQQLQAERMQ</sequence>
<reference key="1">
    <citation type="submission" date="2002-03" db="EMBL/GenBank/DDBJ databases">
        <title>The tissue-specific RNA binding protein SEB-4 binds UG dinucleotides repeats in a SELEX system.</title>
        <authorList>
            <person name="Yamamoto S."/>
            <person name="Jin Y."/>
            <person name="Suzuki H."/>
            <person name="Maegawa S."/>
            <person name="Yasuda K."/>
            <person name="Inoue K."/>
        </authorList>
    </citation>
    <scope>NUCLEOTIDE SEQUENCE [MRNA]</scope>
</reference>
<reference key="2">
    <citation type="journal article" date="2012" name="Cardiovasc. Res.">
        <title>RNA-binding protein RBM24 is required for sarcomere assembly and heart contractility.</title>
        <authorList>
            <person name="Poon K.L."/>
            <person name="Tan K.T."/>
            <person name="Wei Y.Y."/>
            <person name="Ng C.P."/>
            <person name="Colman A."/>
            <person name="Korzh V."/>
            <person name="Xu X.Q."/>
        </authorList>
    </citation>
    <scope>FUNCTION</scope>
    <scope>DEVELOPMENTAL STAGE</scope>
    <scope>DISRUPTION PHENOTYPE</scope>
</reference>